<reference key="1">
    <citation type="journal article" date="2008" name="Antimicrob. Agents Chemother.">
        <title>Mutated response regulator graR is responsible for phenotypic conversion of Staphylococcus aureus from heterogeneous vancomycin-intermediate resistance to vancomycin-intermediate resistance.</title>
        <authorList>
            <person name="Neoh H.-M."/>
            <person name="Cui L."/>
            <person name="Yuzawa H."/>
            <person name="Takeuchi F."/>
            <person name="Matsuo M."/>
            <person name="Hiramatsu K."/>
        </authorList>
    </citation>
    <scope>NUCLEOTIDE SEQUENCE [LARGE SCALE GENOMIC DNA]</scope>
    <source>
        <strain>Mu3 / ATCC 700698</strain>
    </source>
</reference>
<dbReference type="EC" id="6.1.1.12" evidence="1"/>
<dbReference type="EMBL" id="AP009324">
    <property type="protein sequence ID" value="BAF78500.1"/>
    <property type="molecule type" value="Genomic_DNA"/>
</dbReference>
<dbReference type="RefSeq" id="WP_000044799.1">
    <property type="nucleotide sequence ID" value="NZ_CTYB01000003.1"/>
</dbReference>
<dbReference type="SMR" id="A7X344"/>
<dbReference type="KEGG" id="saw:SAHV_1617"/>
<dbReference type="HOGENOM" id="CLU_014330_3_2_9"/>
<dbReference type="GO" id="GO:0005737">
    <property type="term" value="C:cytoplasm"/>
    <property type="evidence" value="ECO:0007669"/>
    <property type="project" value="UniProtKB-SubCell"/>
</dbReference>
<dbReference type="GO" id="GO:0004815">
    <property type="term" value="F:aspartate-tRNA ligase activity"/>
    <property type="evidence" value="ECO:0007669"/>
    <property type="project" value="UniProtKB-UniRule"/>
</dbReference>
<dbReference type="GO" id="GO:0005524">
    <property type="term" value="F:ATP binding"/>
    <property type="evidence" value="ECO:0007669"/>
    <property type="project" value="UniProtKB-UniRule"/>
</dbReference>
<dbReference type="GO" id="GO:0140096">
    <property type="term" value="F:catalytic activity, acting on a protein"/>
    <property type="evidence" value="ECO:0007669"/>
    <property type="project" value="UniProtKB-ARBA"/>
</dbReference>
<dbReference type="GO" id="GO:0003676">
    <property type="term" value="F:nucleic acid binding"/>
    <property type="evidence" value="ECO:0007669"/>
    <property type="project" value="InterPro"/>
</dbReference>
<dbReference type="GO" id="GO:0016740">
    <property type="term" value="F:transferase activity"/>
    <property type="evidence" value="ECO:0007669"/>
    <property type="project" value="UniProtKB-ARBA"/>
</dbReference>
<dbReference type="GO" id="GO:0006422">
    <property type="term" value="P:aspartyl-tRNA aminoacylation"/>
    <property type="evidence" value="ECO:0007669"/>
    <property type="project" value="UniProtKB-UniRule"/>
</dbReference>
<dbReference type="CDD" id="cd00777">
    <property type="entry name" value="AspRS_core"/>
    <property type="match status" value="1"/>
</dbReference>
<dbReference type="CDD" id="cd04317">
    <property type="entry name" value="EcAspRS_like_N"/>
    <property type="match status" value="1"/>
</dbReference>
<dbReference type="Gene3D" id="3.30.930.10">
    <property type="entry name" value="Bira Bifunctional Protein, Domain 2"/>
    <property type="match status" value="1"/>
</dbReference>
<dbReference type="Gene3D" id="3.30.1360.30">
    <property type="entry name" value="GAD-like domain"/>
    <property type="match status" value="1"/>
</dbReference>
<dbReference type="Gene3D" id="2.40.50.140">
    <property type="entry name" value="Nucleic acid-binding proteins"/>
    <property type="match status" value="1"/>
</dbReference>
<dbReference type="HAMAP" id="MF_00044">
    <property type="entry name" value="Asp_tRNA_synth_type1"/>
    <property type="match status" value="1"/>
</dbReference>
<dbReference type="InterPro" id="IPR004364">
    <property type="entry name" value="Aa-tRNA-synt_II"/>
</dbReference>
<dbReference type="InterPro" id="IPR006195">
    <property type="entry name" value="aa-tRNA-synth_II"/>
</dbReference>
<dbReference type="InterPro" id="IPR045864">
    <property type="entry name" value="aa-tRNA-synth_II/BPL/LPL"/>
</dbReference>
<dbReference type="InterPro" id="IPR004524">
    <property type="entry name" value="Asp-tRNA-ligase_1"/>
</dbReference>
<dbReference type="InterPro" id="IPR047089">
    <property type="entry name" value="Asp-tRNA-ligase_1_N"/>
</dbReference>
<dbReference type="InterPro" id="IPR002312">
    <property type="entry name" value="Asp/Asn-tRNA-synth_IIb"/>
</dbReference>
<dbReference type="InterPro" id="IPR047090">
    <property type="entry name" value="AspRS_core"/>
</dbReference>
<dbReference type="InterPro" id="IPR004115">
    <property type="entry name" value="GAD-like_sf"/>
</dbReference>
<dbReference type="InterPro" id="IPR029351">
    <property type="entry name" value="GAD_dom"/>
</dbReference>
<dbReference type="InterPro" id="IPR012340">
    <property type="entry name" value="NA-bd_OB-fold"/>
</dbReference>
<dbReference type="InterPro" id="IPR004365">
    <property type="entry name" value="NA-bd_OB_tRNA"/>
</dbReference>
<dbReference type="NCBIfam" id="TIGR00459">
    <property type="entry name" value="aspS_bact"/>
    <property type="match status" value="1"/>
</dbReference>
<dbReference type="NCBIfam" id="NF001750">
    <property type="entry name" value="PRK00476.1"/>
    <property type="match status" value="1"/>
</dbReference>
<dbReference type="PANTHER" id="PTHR22594:SF5">
    <property type="entry name" value="ASPARTATE--TRNA LIGASE, MITOCHONDRIAL"/>
    <property type="match status" value="1"/>
</dbReference>
<dbReference type="PANTHER" id="PTHR22594">
    <property type="entry name" value="ASPARTYL/LYSYL-TRNA SYNTHETASE"/>
    <property type="match status" value="1"/>
</dbReference>
<dbReference type="Pfam" id="PF02938">
    <property type="entry name" value="GAD"/>
    <property type="match status" value="1"/>
</dbReference>
<dbReference type="Pfam" id="PF00152">
    <property type="entry name" value="tRNA-synt_2"/>
    <property type="match status" value="1"/>
</dbReference>
<dbReference type="Pfam" id="PF01336">
    <property type="entry name" value="tRNA_anti-codon"/>
    <property type="match status" value="1"/>
</dbReference>
<dbReference type="PRINTS" id="PR01042">
    <property type="entry name" value="TRNASYNTHASP"/>
</dbReference>
<dbReference type="SUPFAM" id="SSF55681">
    <property type="entry name" value="Class II aaRS and biotin synthetases"/>
    <property type="match status" value="1"/>
</dbReference>
<dbReference type="SUPFAM" id="SSF55261">
    <property type="entry name" value="GAD domain-like"/>
    <property type="match status" value="1"/>
</dbReference>
<dbReference type="SUPFAM" id="SSF50249">
    <property type="entry name" value="Nucleic acid-binding proteins"/>
    <property type="match status" value="1"/>
</dbReference>
<dbReference type="PROSITE" id="PS50862">
    <property type="entry name" value="AA_TRNA_LIGASE_II"/>
    <property type="match status" value="1"/>
</dbReference>
<evidence type="ECO:0000255" key="1">
    <source>
        <dbReference type="HAMAP-Rule" id="MF_00044"/>
    </source>
</evidence>
<keyword id="KW-0030">Aminoacyl-tRNA synthetase</keyword>
<keyword id="KW-0067">ATP-binding</keyword>
<keyword id="KW-0963">Cytoplasm</keyword>
<keyword id="KW-0436">Ligase</keyword>
<keyword id="KW-0547">Nucleotide-binding</keyword>
<keyword id="KW-0648">Protein biosynthesis</keyword>
<proteinExistence type="inferred from homology"/>
<accession>A7X344</accession>
<organism>
    <name type="scientific">Staphylococcus aureus (strain Mu3 / ATCC 700698)</name>
    <dbReference type="NCBI Taxonomy" id="418127"/>
    <lineage>
        <taxon>Bacteria</taxon>
        <taxon>Bacillati</taxon>
        <taxon>Bacillota</taxon>
        <taxon>Bacilli</taxon>
        <taxon>Bacillales</taxon>
        <taxon>Staphylococcaceae</taxon>
        <taxon>Staphylococcus</taxon>
    </lineage>
</organism>
<comment type="function">
    <text evidence="1">Catalyzes the attachment of L-aspartate to tRNA(Asp) in a two-step reaction: L-aspartate is first activated by ATP to form Asp-AMP and then transferred to the acceptor end of tRNA(Asp).</text>
</comment>
<comment type="catalytic activity">
    <reaction evidence="1">
        <text>tRNA(Asp) + L-aspartate + ATP = L-aspartyl-tRNA(Asp) + AMP + diphosphate</text>
        <dbReference type="Rhea" id="RHEA:19649"/>
        <dbReference type="Rhea" id="RHEA-COMP:9660"/>
        <dbReference type="Rhea" id="RHEA-COMP:9678"/>
        <dbReference type="ChEBI" id="CHEBI:29991"/>
        <dbReference type="ChEBI" id="CHEBI:30616"/>
        <dbReference type="ChEBI" id="CHEBI:33019"/>
        <dbReference type="ChEBI" id="CHEBI:78442"/>
        <dbReference type="ChEBI" id="CHEBI:78516"/>
        <dbReference type="ChEBI" id="CHEBI:456215"/>
        <dbReference type="EC" id="6.1.1.12"/>
    </reaction>
</comment>
<comment type="subunit">
    <text evidence="1">Homodimer.</text>
</comment>
<comment type="subcellular location">
    <subcellularLocation>
        <location evidence="1">Cytoplasm</location>
    </subcellularLocation>
</comment>
<comment type="similarity">
    <text evidence="1">Belongs to the class-II aminoacyl-tRNA synthetase family. Type 1 subfamily.</text>
</comment>
<feature type="chain" id="PRO_1000006766" description="Aspartate--tRNA ligase">
    <location>
        <begin position="1"/>
        <end position="588"/>
    </location>
</feature>
<feature type="region of interest" description="Aspartate" evidence="1">
    <location>
        <begin position="201"/>
        <end position="204"/>
    </location>
</feature>
<feature type="binding site" evidence="1">
    <location>
        <position position="177"/>
    </location>
    <ligand>
        <name>L-aspartate</name>
        <dbReference type="ChEBI" id="CHEBI:29991"/>
    </ligand>
</feature>
<feature type="binding site" evidence="1">
    <location>
        <begin position="223"/>
        <end position="225"/>
    </location>
    <ligand>
        <name>ATP</name>
        <dbReference type="ChEBI" id="CHEBI:30616"/>
    </ligand>
</feature>
<feature type="binding site" evidence="1">
    <location>
        <position position="223"/>
    </location>
    <ligand>
        <name>L-aspartate</name>
        <dbReference type="ChEBI" id="CHEBI:29991"/>
    </ligand>
</feature>
<feature type="binding site" evidence="1">
    <location>
        <position position="232"/>
    </location>
    <ligand>
        <name>ATP</name>
        <dbReference type="ChEBI" id="CHEBI:30616"/>
    </ligand>
</feature>
<feature type="binding site" evidence="1">
    <location>
        <position position="451"/>
    </location>
    <ligand>
        <name>L-aspartate</name>
        <dbReference type="ChEBI" id="CHEBI:29991"/>
    </ligand>
</feature>
<feature type="binding site" evidence="1">
    <location>
        <position position="485"/>
    </location>
    <ligand>
        <name>ATP</name>
        <dbReference type="ChEBI" id="CHEBI:30616"/>
    </ligand>
</feature>
<feature type="binding site" evidence="1">
    <location>
        <position position="492"/>
    </location>
    <ligand>
        <name>L-aspartate</name>
        <dbReference type="ChEBI" id="CHEBI:29991"/>
    </ligand>
</feature>
<feature type="binding site" evidence="1">
    <location>
        <begin position="537"/>
        <end position="540"/>
    </location>
    <ligand>
        <name>ATP</name>
        <dbReference type="ChEBI" id="CHEBI:30616"/>
    </ligand>
</feature>
<protein>
    <recommendedName>
        <fullName evidence="1">Aspartate--tRNA ligase</fullName>
        <ecNumber evidence="1">6.1.1.12</ecNumber>
    </recommendedName>
    <alternativeName>
        <fullName evidence="1">Aspartyl-tRNA synthetase</fullName>
        <shortName evidence="1">AspRS</shortName>
    </alternativeName>
</protein>
<name>SYD_STAA1</name>
<sequence>MSKRTTYCGLVTEAFLGQEITLKGWVNNRRDLGGLIFVDLRDREGIVQVVFNPAFSEEALKIAETVRSEYVVEVQGTVTKRDPETVNPKIKTGQVEVQVTNIKVINKSETPPFSINEENVNVDENIRLKYRYLDLRRQELAQTFKMRHQITRSIRQYLDDEGFFDIETPVLTKSTPEGARDYLVPSRVHDGEFYALPQSPQLFKQLLMISGFDKYYQIVKCFRDEDLRADRQPEFTQVDIEMSFVDQEDVMQMGEEMLKKVVKEVKGVEINGAFPRMTYKEAMRRYGSDKPDTRFEMELIDVSQLGRDMDFKVFKDTVENDGEIKAIVAKGAAEQYTRKDMDALTEFVNIYGAKGLAWVKVVEDGLTGPIGRFFETENVETLLTLTGAEAGDLVMFVADKPNVVAQSLGALRVKLAKELGLIDETKLNFLWVTDWPLLEYDEDAKRYVAAHHPFTSPKEADIAKLGTAPEEAEANAYDIVLNGYELGGGSIRIHDGELQEKMFEVLGFTKEQAQEQFGFLLDAFKYGAPPHGGIALGLDRLVMLLTNRTNLRDTIAFPKTASATCLLTNAPGEVSDKQLEELSLRIRH</sequence>
<gene>
    <name evidence="1" type="primary">aspS</name>
    <name type="ordered locus">SAHV_1617</name>
</gene>